<reference key="1">
    <citation type="submission" date="2009-04" db="EMBL/GenBank/DDBJ databases">
        <title>Genome sequence of Bacillus anthracis A0248.</title>
        <authorList>
            <person name="Dodson R.J."/>
            <person name="Munk A.C."/>
            <person name="Bruce D."/>
            <person name="Detter C."/>
            <person name="Tapia R."/>
            <person name="Sutton G."/>
            <person name="Sims D."/>
            <person name="Brettin T."/>
        </authorList>
    </citation>
    <scope>NUCLEOTIDE SEQUENCE [LARGE SCALE GENOMIC DNA]</scope>
    <source>
        <strain>A0248</strain>
    </source>
</reference>
<feature type="chain" id="PRO_1000148772" description="UPF0435 protein BAA_0470">
    <location>
        <begin position="1"/>
        <end position="74"/>
    </location>
</feature>
<proteinExistence type="inferred from homology"/>
<organism>
    <name type="scientific">Bacillus anthracis (strain A0248)</name>
    <dbReference type="NCBI Taxonomy" id="592021"/>
    <lineage>
        <taxon>Bacteria</taxon>
        <taxon>Bacillati</taxon>
        <taxon>Bacillota</taxon>
        <taxon>Bacilli</taxon>
        <taxon>Bacillales</taxon>
        <taxon>Bacillaceae</taxon>
        <taxon>Bacillus</taxon>
        <taxon>Bacillus cereus group</taxon>
    </lineage>
</organism>
<gene>
    <name type="ordered locus">BAA_0470</name>
</gene>
<sequence>MDLSVKSEENVEYMVEAIKEKLRMVNAGAMRAASFNEEMYEDLRDIYEHVMKRETFSISEMQAITEELGTLIKK</sequence>
<protein>
    <recommendedName>
        <fullName evidence="1">UPF0435 protein BAA_0470</fullName>
    </recommendedName>
</protein>
<name>Y470_BACAA</name>
<comment type="similarity">
    <text evidence="1">Belongs to the UPF0435 family.</text>
</comment>
<accession>C3PCM9</accession>
<evidence type="ECO:0000255" key="1">
    <source>
        <dbReference type="HAMAP-Rule" id="MF_00829"/>
    </source>
</evidence>
<dbReference type="EMBL" id="CP001598">
    <property type="protein sequence ID" value="ACQ50711.1"/>
    <property type="molecule type" value="Genomic_DNA"/>
</dbReference>
<dbReference type="RefSeq" id="WP_000366197.1">
    <property type="nucleotide sequence ID" value="NC_012659.1"/>
</dbReference>
<dbReference type="SMR" id="C3PCM9"/>
<dbReference type="KEGG" id="bai:BAA_0470"/>
<dbReference type="HOGENOM" id="CLU_199533_1_0_9"/>
<dbReference type="HAMAP" id="MF_00829">
    <property type="entry name" value="UPF0435"/>
    <property type="match status" value="1"/>
</dbReference>
<dbReference type="InterPro" id="IPR009507">
    <property type="entry name" value="UPF0435"/>
</dbReference>
<dbReference type="Pfam" id="PF06569">
    <property type="entry name" value="DUF1128"/>
    <property type="match status" value="1"/>
</dbReference>